<name>LRRF2_RAT</name>
<evidence type="ECO:0000250" key="1"/>
<evidence type="ECO:0000250" key="2">
    <source>
        <dbReference type="UniProtKB" id="Q91WK0"/>
    </source>
</evidence>
<evidence type="ECO:0000250" key="3">
    <source>
        <dbReference type="UniProtKB" id="Q9Y608"/>
    </source>
</evidence>
<evidence type="ECO:0000255" key="4"/>
<evidence type="ECO:0000256" key="5">
    <source>
        <dbReference type="SAM" id="MobiDB-lite"/>
    </source>
</evidence>
<evidence type="ECO:0000305" key="6"/>
<evidence type="ECO:0007744" key="7">
    <source>
    </source>
</evidence>
<dbReference type="EMBL" id="BC097955">
    <property type="protein sequence ID" value="AAH97955.1"/>
    <property type="molecule type" value="mRNA"/>
</dbReference>
<dbReference type="RefSeq" id="NP_001019932.1">
    <property type="nucleotide sequence ID" value="NM_001024761.1"/>
</dbReference>
<dbReference type="SMR" id="Q4V7E8"/>
<dbReference type="BioGRID" id="256809">
    <property type="interactions" value="3"/>
</dbReference>
<dbReference type="FunCoup" id="Q4V7E8">
    <property type="interactions" value="1532"/>
</dbReference>
<dbReference type="IntAct" id="Q4V7E8">
    <property type="interactions" value="1"/>
</dbReference>
<dbReference type="STRING" id="10116.ENSRNOP00000052912"/>
<dbReference type="iPTMnet" id="Q4V7E8"/>
<dbReference type="PhosphoSitePlus" id="Q4V7E8"/>
<dbReference type="jPOST" id="Q4V7E8"/>
<dbReference type="PaxDb" id="10116-ENSRNOP00000052912"/>
<dbReference type="Ensembl" id="ENSRNOT00000056060.3">
    <property type="protein sequence ID" value="ENSRNOP00000052912.2"/>
    <property type="gene ID" value="ENSRNOG00000021047.7"/>
</dbReference>
<dbReference type="GeneID" id="301035"/>
<dbReference type="KEGG" id="rno:301035"/>
<dbReference type="UCSC" id="RGD:1306234">
    <property type="organism name" value="rat"/>
</dbReference>
<dbReference type="AGR" id="RGD:1306234"/>
<dbReference type="CTD" id="9209"/>
<dbReference type="RGD" id="1306234">
    <property type="gene designation" value="Lrrfip2"/>
</dbReference>
<dbReference type="eggNOG" id="KOG2010">
    <property type="taxonomic scope" value="Eukaryota"/>
</dbReference>
<dbReference type="GeneTree" id="ENSGT00530000063564"/>
<dbReference type="HOGENOM" id="CLU_018871_0_0_1"/>
<dbReference type="InParanoid" id="Q4V7E8"/>
<dbReference type="PhylomeDB" id="Q4V7E8"/>
<dbReference type="TreeFam" id="TF314109"/>
<dbReference type="PRO" id="PR:Q4V7E8"/>
<dbReference type="Proteomes" id="UP000002494">
    <property type="component" value="Chromosome 8"/>
</dbReference>
<dbReference type="Bgee" id="ENSRNOG00000021047">
    <property type="expression patterns" value="Expressed in testis and 19 other cell types or tissues"/>
</dbReference>
<dbReference type="GO" id="GO:0030275">
    <property type="term" value="F:LRR domain binding"/>
    <property type="evidence" value="ECO:0000266"/>
    <property type="project" value="RGD"/>
</dbReference>
<dbReference type="GO" id="GO:0035660">
    <property type="term" value="P:MyD88-dependent toll-like receptor 4 signaling pathway"/>
    <property type="evidence" value="ECO:0000266"/>
    <property type="project" value="RGD"/>
</dbReference>
<dbReference type="GO" id="GO:0002756">
    <property type="term" value="P:MyD88-independent toll-like receptor signaling pathway"/>
    <property type="evidence" value="ECO:0000266"/>
    <property type="project" value="RGD"/>
</dbReference>
<dbReference type="GO" id="GO:0032760">
    <property type="term" value="P:positive regulation of tumor necrosis factor production"/>
    <property type="evidence" value="ECO:0000266"/>
    <property type="project" value="RGD"/>
</dbReference>
<dbReference type="GO" id="GO:0006355">
    <property type="term" value="P:regulation of DNA-templated transcription"/>
    <property type="evidence" value="ECO:0007669"/>
    <property type="project" value="InterPro"/>
</dbReference>
<dbReference type="GO" id="GO:0016055">
    <property type="term" value="P:Wnt signaling pathway"/>
    <property type="evidence" value="ECO:0007669"/>
    <property type="project" value="UniProtKB-KW"/>
</dbReference>
<dbReference type="FunFam" id="1.20.5.4090:FF:000001">
    <property type="entry name" value="leucine-rich repeat flightless-interacting protein 2 isoform X1"/>
    <property type="match status" value="1"/>
</dbReference>
<dbReference type="Gene3D" id="1.20.5.4090">
    <property type="match status" value="1"/>
</dbReference>
<dbReference type="InterPro" id="IPR019139">
    <property type="entry name" value="LRRFIP1/2"/>
</dbReference>
<dbReference type="PANTHER" id="PTHR19212">
    <property type="entry name" value="LEUCINE RICH REPEAT IN FLII INTERACTING PROTEIN"/>
    <property type="match status" value="1"/>
</dbReference>
<dbReference type="PANTHER" id="PTHR19212:SF6">
    <property type="entry name" value="LEUCINE-RICH REPEAT FLIGHTLESS-INTERACTING PROTEIN 2"/>
    <property type="match status" value="1"/>
</dbReference>
<dbReference type="Pfam" id="PF09738">
    <property type="entry name" value="LRRFIP"/>
    <property type="match status" value="1"/>
</dbReference>
<reference key="1">
    <citation type="journal article" date="2004" name="Genome Res.">
        <title>The status, quality, and expansion of the NIH full-length cDNA project: the Mammalian Gene Collection (MGC).</title>
        <authorList>
            <consortium name="The MGC Project Team"/>
        </authorList>
    </citation>
    <scope>NUCLEOTIDE SEQUENCE [LARGE SCALE MRNA]</scope>
    <source>
        <tissue>Testis</tissue>
    </source>
</reference>
<reference key="2">
    <citation type="journal article" date="2012" name="Nat. Commun.">
        <title>Quantitative maps of protein phosphorylation sites across 14 different rat organs and tissues.</title>
        <authorList>
            <person name="Lundby A."/>
            <person name="Secher A."/>
            <person name="Lage K."/>
            <person name="Nordsborg N.B."/>
            <person name="Dmytriyev A."/>
            <person name="Lundby C."/>
            <person name="Olsen J.V."/>
        </authorList>
    </citation>
    <scope>PHOSPHORYLATION [LARGE SCALE ANALYSIS] AT SER-18; SER-125 AND SER-133</scope>
    <scope>IDENTIFICATION BY MASS SPECTROMETRY [LARGE SCALE ANALYSIS]</scope>
</reference>
<keyword id="KW-0175">Coiled coil</keyword>
<keyword id="KW-0597">Phosphoprotein</keyword>
<keyword id="KW-1185">Reference proteome</keyword>
<keyword id="KW-0879">Wnt signaling pathway</keyword>
<accession>Q4V7E8</accession>
<sequence length="437" mass="49773">MGTPGSGRKRTPVKDRFSAEDEALSNIAREAEARLAAKRAARAEARDIRMRELERQQRESSSKDITGTHWSRASTPKRRDMMYDSIKDRSSRVSSLLDEKSDKQYAENYTRPSSRNSASATTPLSGNSSRRGSGDTSSLIDPDTSLSELRESLSEVEEKYKKAMVSNAQLDNEKNNLIYQVDTLKDVIEEQEEQMAEFYRENEEKSKELERQKHMCSVLQHKMDELKEGLRQRDELIEKHGLVIIPESTPNGDVNHEPVVGAITAVSQEAAQVLESAGEGPLDVRLRKLAEEKDELLSQIRKLKLQLEEERQKCSRNDGMSGDLAGLQNGSDLQFIEMQRDANRQISEYKFKLSKAEQDIATLEQSISRLEGQVLRYKTAAENAEKIEDELKAEKRKLQRELRTAQDKIEEMEMTNSHLAKRLEKMKANRTALLAQQ</sequence>
<comment type="function">
    <text evidence="1">May function as activator of the canonical Wnt signaling pathway, in association with DVL3, upstream of CTNNB1/beta-catenin. Positively regulates Toll-like receptor (TLR) signaling in response to agonist probably by competing with the negative FLII regulator for MYD88-binding (By similarity).</text>
</comment>
<comment type="subunit">
    <text evidence="1">Interacts with DVL3 and FLII (By similarity). Weakly interacts with MYD88 in resting cells. Following LPS-stimulation, the interaction with MYD88 is rapidly enhanced; the complex gradually dissociates to basal levels after 6 hours of stimulation. Interaction with MYD88 is regulated by LPS-induced phosphorylation. In the presence of LPS, competes with FLII for MYD88-binding (By similarity).</text>
</comment>
<comment type="similarity">
    <text evidence="6">Belongs to the LRRFIP family.</text>
</comment>
<feature type="chain" id="PRO_0000245248" description="Leucine-rich repeat flightless-interacting protein 2">
    <location>
        <begin position="1"/>
        <end position="437"/>
    </location>
</feature>
<feature type="region of interest" description="Disordered" evidence="5">
    <location>
        <begin position="33"/>
        <end position="152"/>
    </location>
</feature>
<feature type="coiled-coil region" evidence="4">
    <location>
        <begin position="22"/>
        <end position="49"/>
    </location>
</feature>
<feature type="coiled-coil region" evidence="4">
    <location>
        <begin position="143"/>
        <end position="239"/>
    </location>
</feature>
<feature type="coiled-coil region" evidence="4">
    <location>
        <begin position="282"/>
        <end position="430"/>
    </location>
</feature>
<feature type="compositionally biased region" description="Basic and acidic residues" evidence="5">
    <location>
        <begin position="33"/>
        <end position="62"/>
    </location>
</feature>
<feature type="compositionally biased region" description="Polar residues" evidence="5">
    <location>
        <begin position="63"/>
        <end position="74"/>
    </location>
</feature>
<feature type="compositionally biased region" description="Basic and acidic residues" evidence="5">
    <location>
        <begin position="77"/>
        <end position="105"/>
    </location>
</feature>
<feature type="compositionally biased region" description="Polar residues" evidence="5">
    <location>
        <begin position="110"/>
        <end position="139"/>
    </location>
</feature>
<feature type="modified residue" description="Phosphoserine" evidence="7">
    <location>
        <position position="18"/>
    </location>
</feature>
<feature type="modified residue" description="Phosphoserine" evidence="3">
    <location>
        <position position="114"/>
    </location>
</feature>
<feature type="modified residue" description="Phosphoserine" evidence="3">
    <location>
        <position position="117"/>
    </location>
</feature>
<feature type="modified residue" description="Phosphoserine" evidence="7">
    <location>
        <position position="125"/>
    </location>
</feature>
<feature type="modified residue" description="Phosphoserine" evidence="3">
    <location>
        <position position="129"/>
    </location>
</feature>
<feature type="modified residue" description="Phosphoserine" evidence="7">
    <location>
        <position position="133"/>
    </location>
</feature>
<feature type="modified residue" description="Phosphothreonine" evidence="2">
    <location>
        <position position="136"/>
    </location>
</feature>
<feature type="modified residue" description="Phosphoserine" evidence="2">
    <location>
        <position position="137"/>
    </location>
</feature>
<feature type="modified residue" description="Phosphoserine" evidence="2">
    <location>
        <position position="138"/>
    </location>
</feature>
<organism>
    <name type="scientific">Rattus norvegicus</name>
    <name type="common">Rat</name>
    <dbReference type="NCBI Taxonomy" id="10116"/>
    <lineage>
        <taxon>Eukaryota</taxon>
        <taxon>Metazoa</taxon>
        <taxon>Chordata</taxon>
        <taxon>Craniata</taxon>
        <taxon>Vertebrata</taxon>
        <taxon>Euteleostomi</taxon>
        <taxon>Mammalia</taxon>
        <taxon>Eutheria</taxon>
        <taxon>Euarchontoglires</taxon>
        <taxon>Glires</taxon>
        <taxon>Rodentia</taxon>
        <taxon>Myomorpha</taxon>
        <taxon>Muroidea</taxon>
        <taxon>Muridae</taxon>
        <taxon>Murinae</taxon>
        <taxon>Rattus</taxon>
    </lineage>
</organism>
<proteinExistence type="evidence at protein level"/>
<gene>
    <name type="primary">Lrrfip2</name>
</gene>
<protein>
    <recommendedName>
        <fullName>Leucine-rich repeat flightless-interacting protein 2</fullName>
        <shortName>LRR FLII-interacting protein 2</shortName>
    </recommendedName>
</protein>